<protein>
    <recommendedName>
        <fullName evidence="1">Ribosome maturation factor RimP</fullName>
    </recommendedName>
</protein>
<reference key="1">
    <citation type="journal article" date="2005" name="Proc. Natl. Acad. Sci. U.S.A.">
        <title>Complete genome sequence of Vibrio fischeri: a symbiotic bacterium with pathogenic congeners.</title>
        <authorList>
            <person name="Ruby E.G."/>
            <person name="Urbanowski M."/>
            <person name="Campbell J."/>
            <person name="Dunn A."/>
            <person name="Faini M."/>
            <person name="Gunsalus R."/>
            <person name="Lostroh P."/>
            <person name="Lupp C."/>
            <person name="McCann J."/>
            <person name="Millikan D."/>
            <person name="Schaefer A."/>
            <person name="Stabb E."/>
            <person name="Stevens A."/>
            <person name="Visick K."/>
            <person name="Whistler C."/>
            <person name="Greenberg E.P."/>
        </authorList>
    </citation>
    <scope>NUCLEOTIDE SEQUENCE [LARGE SCALE GENOMIC DNA]</scope>
    <source>
        <strain>ATCC 700601 / ES114</strain>
    </source>
</reference>
<name>RIMP_ALIF1</name>
<keyword id="KW-0963">Cytoplasm</keyword>
<keyword id="KW-1185">Reference proteome</keyword>
<keyword id="KW-0690">Ribosome biogenesis</keyword>
<accession>Q5E7L7</accession>
<evidence type="ECO:0000255" key="1">
    <source>
        <dbReference type="HAMAP-Rule" id="MF_01077"/>
    </source>
</evidence>
<dbReference type="EMBL" id="CP000020">
    <property type="protein sequence ID" value="AAW84979.1"/>
    <property type="molecule type" value="Genomic_DNA"/>
</dbReference>
<dbReference type="RefSeq" id="WP_011261256.1">
    <property type="nucleotide sequence ID" value="NC_006840.2"/>
</dbReference>
<dbReference type="RefSeq" id="YP_203867.1">
    <property type="nucleotide sequence ID" value="NC_006840.2"/>
</dbReference>
<dbReference type="SMR" id="Q5E7L7"/>
<dbReference type="STRING" id="312309.VF_0484"/>
<dbReference type="EnsemblBacteria" id="AAW84979">
    <property type="protein sequence ID" value="AAW84979"/>
    <property type="gene ID" value="VF_0484"/>
</dbReference>
<dbReference type="GeneID" id="54163121"/>
<dbReference type="KEGG" id="vfi:VF_0484"/>
<dbReference type="PATRIC" id="fig|312309.11.peg.474"/>
<dbReference type="eggNOG" id="COG0779">
    <property type="taxonomic scope" value="Bacteria"/>
</dbReference>
<dbReference type="HOGENOM" id="CLU_070525_1_1_6"/>
<dbReference type="OrthoDB" id="9805006at2"/>
<dbReference type="Proteomes" id="UP000000537">
    <property type="component" value="Chromosome I"/>
</dbReference>
<dbReference type="GO" id="GO:0005829">
    <property type="term" value="C:cytosol"/>
    <property type="evidence" value="ECO:0007669"/>
    <property type="project" value="TreeGrafter"/>
</dbReference>
<dbReference type="GO" id="GO:0000028">
    <property type="term" value="P:ribosomal small subunit assembly"/>
    <property type="evidence" value="ECO:0007669"/>
    <property type="project" value="TreeGrafter"/>
</dbReference>
<dbReference type="GO" id="GO:0006412">
    <property type="term" value="P:translation"/>
    <property type="evidence" value="ECO:0007669"/>
    <property type="project" value="TreeGrafter"/>
</dbReference>
<dbReference type="CDD" id="cd01734">
    <property type="entry name" value="YlxS_C"/>
    <property type="match status" value="1"/>
</dbReference>
<dbReference type="FunFam" id="2.30.30.180:FF:000001">
    <property type="entry name" value="Ribosome maturation factor RimP"/>
    <property type="match status" value="1"/>
</dbReference>
<dbReference type="FunFam" id="3.30.300.70:FF:000001">
    <property type="entry name" value="Ribosome maturation factor RimP"/>
    <property type="match status" value="1"/>
</dbReference>
<dbReference type="Gene3D" id="2.30.30.180">
    <property type="entry name" value="Ribosome maturation factor RimP, C-terminal domain"/>
    <property type="match status" value="1"/>
</dbReference>
<dbReference type="Gene3D" id="3.30.300.70">
    <property type="entry name" value="RimP-like superfamily, N-terminal"/>
    <property type="match status" value="1"/>
</dbReference>
<dbReference type="HAMAP" id="MF_01077">
    <property type="entry name" value="RimP"/>
    <property type="match status" value="1"/>
</dbReference>
<dbReference type="InterPro" id="IPR003728">
    <property type="entry name" value="Ribosome_maturation_RimP"/>
</dbReference>
<dbReference type="InterPro" id="IPR028998">
    <property type="entry name" value="RimP_C"/>
</dbReference>
<dbReference type="InterPro" id="IPR036847">
    <property type="entry name" value="RimP_C_sf"/>
</dbReference>
<dbReference type="InterPro" id="IPR028989">
    <property type="entry name" value="RimP_N"/>
</dbReference>
<dbReference type="InterPro" id="IPR035956">
    <property type="entry name" value="RimP_N_sf"/>
</dbReference>
<dbReference type="NCBIfam" id="NF000927">
    <property type="entry name" value="PRK00092.1-1"/>
    <property type="match status" value="1"/>
</dbReference>
<dbReference type="PANTHER" id="PTHR33867">
    <property type="entry name" value="RIBOSOME MATURATION FACTOR RIMP"/>
    <property type="match status" value="1"/>
</dbReference>
<dbReference type="PANTHER" id="PTHR33867:SF1">
    <property type="entry name" value="RIBOSOME MATURATION FACTOR RIMP"/>
    <property type="match status" value="1"/>
</dbReference>
<dbReference type="Pfam" id="PF17384">
    <property type="entry name" value="DUF150_C"/>
    <property type="match status" value="1"/>
</dbReference>
<dbReference type="Pfam" id="PF02576">
    <property type="entry name" value="RimP_N"/>
    <property type="match status" value="1"/>
</dbReference>
<dbReference type="SUPFAM" id="SSF74942">
    <property type="entry name" value="YhbC-like, C-terminal domain"/>
    <property type="match status" value="1"/>
</dbReference>
<dbReference type="SUPFAM" id="SSF75420">
    <property type="entry name" value="YhbC-like, N-terminal domain"/>
    <property type="match status" value="1"/>
</dbReference>
<proteinExistence type="inferred from homology"/>
<organism>
    <name type="scientific">Aliivibrio fischeri (strain ATCC 700601 / ES114)</name>
    <name type="common">Vibrio fischeri</name>
    <dbReference type="NCBI Taxonomy" id="312309"/>
    <lineage>
        <taxon>Bacteria</taxon>
        <taxon>Pseudomonadati</taxon>
        <taxon>Pseudomonadota</taxon>
        <taxon>Gammaproteobacteria</taxon>
        <taxon>Vibrionales</taxon>
        <taxon>Vibrionaceae</taxon>
        <taxon>Aliivibrio</taxon>
    </lineage>
</organism>
<sequence length="151" mass="16803">MTGLERQLTEMLEAPVGALGYELVGLEFVRAGEHSTLRVFIDHENGIFVEDCAEASRQISAVMDVEDPITVAYNLEVSSPGLERPLFKAAHYQQFVGHEVSLVLKMPMNNRRKWKGDILEINGEIVTVTVDGNNEEFALSNISKANLVPKF</sequence>
<feature type="chain" id="PRO_0000229291" description="Ribosome maturation factor RimP">
    <location>
        <begin position="1"/>
        <end position="151"/>
    </location>
</feature>
<comment type="function">
    <text evidence="1">Required for maturation of 30S ribosomal subunits.</text>
</comment>
<comment type="subcellular location">
    <subcellularLocation>
        <location evidence="1">Cytoplasm</location>
    </subcellularLocation>
</comment>
<comment type="similarity">
    <text evidence="1">Belongs to the RimP family.</text>
</comment>
<gene>
    <name evidence="1" type="primary">rimP</name>
    <name type="ordered locus">VF_0484</name>
</gene>